<keyword id="KW-0030">Aminoacyl-tRNA synthetase</keyword>
<keyword id="KW-0067">ATP-binding</keyword>
<keyword id="KW-0963">Cytoplasm</keyword>
<keyword id="KW-0436">Ligase</keyword>
<keyword id="KW-0460">Magnesium</keyword>
<keyword id="KW-0479">Metal-binding</keyword>
<keyword id="KW-0547">Nucleotide-binding</keyword>
<keyword id="KW-0648">Protein biosynthesis</keyword>
<proteinExistence type="inferred from homology"/>
<feature type="chain" id="PRO_0000231981" description="Phenylalanine--tRNA ligase alpha subunit">
    <location>
        <begin position="1"/>
        <end position="345"/>
    </location>
</feature>
<feature type="binding site" evidence="1">
    <location>
        <position position="262"/>
    </location>
    <ligand>
        <name>Mg(2+)</name>
        <dbReference type="ChEBI" id="CHEBI:18420"/>
        <note>shared with beta subunit</note>
    </ligand>
</feature>
<accession>Q3YSX1</accession>
<organism>
    <name type="scientific">Ehrlichia canis (strain Jake)</name>
    <dbReference type="NCBI Taxonomy" id="269484"/>
    <lineage>
        <taxon>Bacteria</taxon>
        <taxon>Pseudomonadati</taxon>
        <taxon>Pseudomonadota</taxon>
        <taxon>Alphaproteobacteria</taxon>
        <taxon>Rickettsiales</taxon>
        <taxon>Anaplasmataceae</taxon>
        <taxon>Ehrlichia</taxon>
    </lineage>
</organism>
<evidence type="ECO:0000255" key="1">
    <source>
        <dbReference type="HAMAP-Rule" id="MF_00281"/>
    </source>
</evidence>
<comment type="catalytic activity">
    <reaction evidence="1">
        <text>tRNA(Phe) + L-phenylalanine + ATP = L-phenylalanyl-tRNA(Phe) + AMP + diphosphate + H(+)</text>
        <dbReference type="Rhea" id="RHEA:19413"/>
        <dbReference type="Rhea" id="RHEA-COMP:9668"/>
        <dbReference type="Rhea" id="RHEA-COMP:9699"/>
        <dbReference type="ChEBI" id="CHEBI:15378"/>
        <dbReference type="ChEBI" id="CHEBI:30616"/>
        <dbReference type="ChEBI" id="CHEBI:33019"/>
        <dbReference type="ChEBI" id="CHEBI:58095"/>
        <dbReference type="ChEBI" id="CHEBI:78442"/>
        <dbReference type="ChEBI" id="CHEBI:78531"/>
        <dbReference type="ChEBI" id="CHEBI:456215"/>
        <dbReference type="EC" id="6.1.1.20"/>
    </reaction>
</comment>
<comment type="cofactor">
    <cofactor evidence="1">
        <name>Mg(2+)</name>
        <dbReference type="ChEBI" id="CHEBI:18420"/>
    </cofactor>
    <text evidence="1">Binds 2 magnesium ions per tetramer.</text>
</comment>
<comment type="subunit">
    <text evidence="1">Tetramer of two alpha and two beta subunits.</text>
</comment>
<comment type="subcellular location">
    <subcellularLocation>
        <location evidence="1">Cytoplasm</location>
    </subcellularLocation>
</comment>
<comment type="similarity">
    <text evidence="1">Belongs to the class-II aminoacyl-tRNA synthetase family. Phe-tRNA synthetase alpha subunit type 1 subfamily.</text>
</comment>
<reference key="1">
    <citation type="journal article" date="2006" name="J. Bacteriol.">
        <title>The genome of the obligately intracellular bacterium Ehrlichia canis reveals themes of complex membrane structure and immune evasion strategies.</title>
        <authorList>
            <person name="Mavromatis K."/>
            <person name="Doyle C.K."/>
            <person name="Lykidis A."/>
            <person name="Ivanova N."/>
            <person name="Francino M.P."/>
            <person name="Chain P."/>
            <person name="Shin M."/>
            <person name="Malfatti S."/>
            <person name="Larimer F."/>
            <person name="Copeland A."/>
            <person name="Detter J.C."/>
            <person name="Land M."/>
            <person name="Richardson P.M."/>
            <person name="Yu X.J."/>
            <person name="Walker D.H."/>
            <person name="McBride J.W."/>
            <person name="Kyrpides N.C."/>
        </authorList>
    </citation>
    <scope>NUCLEOTIDE SEQUENCE [LARGE SCALE GENOMIC DNA]</scope>
    <source>
        <strain>Jake</strain>
    </source>
</reference>
<dbReference type="EC" id="6.1.1.20" evidence="1"/>
<dbReference type="EMBL" id="CP000107">
    <property type="protein sequence ID" value="AAZ68184.1"/>
    <property type="molecule type" value="Genomic_DNA"/>
</dbReference>
<dbReference type="RefSeq" id="WP_011304262.1">
    <property type="nucleotide sequence ID" value="NC_007354.1"/>
</dbReference>
<dbReference type="SMR" id="Q3YSX1"/>
<dbReference type="FunCoup" id="Q3YSX1">
    <property type="interactions" value="314"/>
</dbReference>
<dbReference type="STRING" id="269484.Ecaj_0133"/>
<dbReference type="KEGG" id="ecn:Ecaj_0133"/>
<dbReference type="eggNOG" id="COG0016">
    <property type="taxonomic scope" value="Bacteria"/>
</dbReference>
<dbReference type="HOGENOM" id="CLU_025086_0_1_5"/>
<dbReference type="InParanoid" id="Q3YSX1"/>
<dbReference type="Proteomes" id="UP000000435">
    <property type="component" value="Chromosome"/>
</dbReference>
<dbReference type="GO" id="GO:0005737">
    <property type="term" value="C:cytoplasm"/>
    <property type="evidence" value="ECO:0007669"/>
    <property type="project" value="UniProtKB-SubCell"/>
</dbReference>
<dbReference type="GO" id="GO:0005524">
    <property type="term" value="F:ATP binding"/>
    <property type="evidence" value="ECO:0007669"/>
    <property type="project" value="UniProtKB-UniRule"/>
</dbReference>
<dbReference type="GO" id="GO:0000287">
    <property type="term" value="F:magnesium ion binding"/>
    <property type="evidence" value="ECO:0007669"/>
    <property type="project" value="UniProtKB-UniRule"/>
</dbReference>
<dbReference type="GO" id="GO:0004826">
    <property type="term" value="F:phenylalanine-tRNA ligase activity"/>
    <property type="evidence" value="ECO:0007669"/>
    <property type="project" value="UniProtKB-UniRule"/>
</dbReference>
<dbReference type="GO" id="GO:0000049">
    <property type="term" value="F:tRNA binding"/>
    <property type="evidence" value="ECO:0007669"/>
    <property type="project" value="InterPro"/>
</dbReference>
<dbReference type="GO" id="GO:0006432">
    <property type="term" value="P:phenylalanyl-tRNA aminoacylation"/>
    <property type="evidence" value="ECO:0007669"/>
    <property type="project" value="UniProtKB-UniRule"/>
</dbReference>
<dbReference type="CDD" id="cd00496">
    <property type="entry name" value="PheRS_alpha_core"/>
    <property type="match status" value="1"/>
</dbReference>
<dbReference type="Gene3D" id="3.30.930.10">
    <property type="entry name" value="Bira Bifunctional Protein, Domain 2"/>
    <property type="match status" value="1"/>
</dbReference>
<dbReference type="HAMAP" id="MF_00281">
    <property type="entry name" value="Phe_tRNA_synth_alpha1"/>
    <property type="match status" value="1"/>
</dbReference>
<dbReference type="InterPro" id="IPR006195">
    <property type="entry name" value="aa-tRNA-synth_II"/>
</dbReference>
<dbReference type="InterPro" id="IPR045864">
    <property type="entry name" value="aa-tRNA-synth_II/BPL/LPL"/>
</dbReference>
<dbReference type="InterPro" id="IPR004529">
    <property type="entry name" value="Phe-tRNA-synth_IIc_asu"/>
</dbReference>
<dbReference type="InterPro" id="IPR004188">
    <property type="entry name" value="Phe-tRNA_ligase_II_N"/>
</dbReference>
<dbReference type="InterPro" id="IPR022911">
    <property type="entry name" value="Phe_tRNA_ligase_alpha1_bac"/>
</dbReference>
<dbReference type="InterPro" id="IPR002319">
    <property type="entry name" value="Phenylalanyl-tRNA_Synthase"/>
</dbReference>
<dbReference type="InterPro" id="IPR010978">
    <property type="entry name" value="tRNA-bd_arm"/>
</dbReference>
<dbReference type="NCBIfam" id="TIGR00468">
    <property type="entry name" value="pheS"/>
    <property type="match status" value="1"/>
</dbReference>
<dbReference type="PANTHER" id="PTHR11538:SF41">
    <property type="entry name" value="PHENYLALANINE--TRNA LIGASE, MITOCHONDRIAL"/>
    <property type="match status" value="1"/>
</dbReference>
<dbReference type="PANTHER" id="PTHR11538">
    <property type="entry name" value="PHENYLALANYL-TRNA SYNTHETASE"/>
    <property type="match status" value="1"/>
</dbReference>
<dbReference type="Pfam" id="PF02912">
    <property type="entry name" value="Phe_tRNA-synt_N"/>
    <property type="match status" value="1"/>
</dbReference>
<dbReference type="Pfam" id="PF01409">
    <property type="entry name" value="tRNA-synt_2d"/>
    <property type="match status" value="1"/>
</dbReference>
<dbReference type="SUPFAM" id="SSF55681">
    <property type="entry name" value="Class II aaRS and biotin synthetases"/>
    <property type="match status" value="1"/>
</dbReference>
<dbReference type="SUPFAM" id="SSF46589">
    <property type="entry name" value="tRNA-binding arm"/>
    <property type="match status" value="1"/>
</dbReference>
<dbReference type="PROSITE" id="PS50862">
    <property type="entry name" value="AA_TRNA_LIGASE_II"/>
    <property type="match status" value="1"/>
</dbReference>
<sequence length="345" mass="39884">MLHSNIYSLQTEATNKILSTSSLEELESLRLYYFGKSGVITACLRSISTINNIEERKSIGSAVNSICAELKSLMNSQKEKLHKIQIDAQLMEDKIDISLPVRPKQIAKLHPISKTLHEVKHIFVSLGFKLSDGPELEDEFHVFDALNTHKHHPAREENDTFYLKKLVNNKRIVLRTHTSSVQIRTMESNNGNYPIKIIAPGKVYRNDWDATHSPMFHQIEGLYIDKNINMGHLKYCINYFLKKFFGENIQIRFRNSYFPFTEPSAEVDIKCSQKNWMEILGCGMVHHNVLTNVNINPEQYSGFAFGIGIERIAMIKYNINDLRKFYSNKLQWLTHHGFCFTNLIT</sequence>
<name>SYFA_EHRCJ</name>
<gene>
    <name evidence="1" type="primary">pheS</name>
    <name type="ordered locus">Ecaj_0133</name>
</gene>
<protein>
    <recommendedName>
        <fullName evidence="1">Phenylalanine--tRNA ligase alpha subunit</fullName>
        <ecNumber evidence="1">6.1.1.20</ecNumber>
    </recommendedName>
    <alternativeName>
        <fullName evidence="1">Phenylalanyl-tRNA synthetase alpha subunit</fullName>
        <shortName evidence="1">PheRS</shortName>
    </alternativeName>
</protein>